<evidence type="ECO:0000255" key="1">
    <source>
        <dbReference type="HAMAP-Rule" id="MF_01007"/>
    </source>
</evidence>
<evidence type="ECO:0000256" key="2">
    <source>
        <dbReference type="SAM" id="MobiDB-lite"/>
    </source>
</evidence>
<evidence type="ECO:0000305" key="3"/>
<feature type="chain" id="PRO_0000108758" description="Ribosomal RNA small subunit methyltransferase H">
    <location>
        <begin position="1"/>
        <end position="332"/>
    </location>
</feature>
<feature type="region of interest" description="Disordered" evidence="2">
    <location>
        <begin position="309"/>
        <end position="332"/>
    </location>
</feature>
<feature type="binding site" evidence="1">
    <location>
        <begin position="38"/>
        <end position="40"/>
    </location>
    <ligand>
        <name>S-adenosyl-L-methionine</name>
        <dbReference type="ChEBI" id="CHEBI:59789"/>
    </ligand>
</feature>
<feature type="binding site" evidence="1">
    <location>
        <position position="56"/>
    </location>
    <ligand>
        <name>S-adenosyl-L-methionine</name>
        <dbReference type="ChEBI" id="CHEBI:59789"/>
    </ligand>
</feature>
<feature type="binding site" evidence="1">
    <location>
        <position position="83"/>
    </location>
    <ligand>
        <name>S-adenosyl-L-methionine</name>
        <dbReference type="ChEBI" id="CHEBI:59789"/>
    </ligand>
</feature>
<feature type="binding site" evidence="1">
    <location>
        <position position="104"/>
    </location>
    <ligand>
        <name>S-adenosyl-L-methionine</name>
        <dbReference type="ChEBI" id="CHEBI:59789"/>
    </ligand>
</feature>
<feature type="binding site" evidence="1">
    <location>
        <position position="111"/>
    </location>
    <ligand>
        <name>S-adenosyl-L-methionine</name>
        <dbReference type="ChEBI" id="CHEBI:59789"/>
    </ligand>
</feature>
<feature type="sequence conflict" description="In Ref. 1; AAD53943/AAF23786." evidence="3" ref="1">
    <original>F</original>
    <variation>L</variation>
    <location>
        <position position="141"/>
    </location>
</feature>
<feature type="sequence conflict" description="In Ref. 1; AAD53943/AAF23786." evidence="3" ref="1">
    <original>R</original>
    <variation>T</variation>
    <location>
        <position position="168"/>
    </location>
</feature>
<feature type="sequence conflict" description="In Ref. 1; AAD53943." evidence="3" ref="1">
    <original>AARPLTTTFQ</original>
    <variation>RGTAFKRRLFR</variation>
    <location>
        <begin position="172"/>
        <end position="181"/>
    </location>
</feature>
<organism>
    <name type="scientific">Zymomonas mobilis subsp. mobilis (strain ATCC 31821 / ZM4 / CP4)</name>
    <dbReference type="NCBI Taxonomy" id="264203"/>
    <lineage>
        <taxon>Bacteria</taxon>
        <taxon>Pseudomonadati</taxon>
        <taxon>Pseudomonadota</taxon>
        <taxon>Alphaproteobacteria</taxon>
        <taxon>Sphingomonadales</taxon>
        <taxon>Zymomonadaceae</taxon>
        <taxon>Zymomonas</taxon>
    </lineage>
</organism>
<protein>
    <recommendedName>
        <fullName evidence="1">Ribosomal RNA small subunit methyltransferase H</fullName>
        <ecNumber evidence="1">2.1.1.199</ecNumber>
    </recommendedName>
    <alternativeName>
        <fullName evidence="1">16S rRNA m(4)C1402 methyltransferase</fullName>
    </alternativeName>
    <alternativeName>
        <fullName evidence="1">rRNA (cytosine-N(4)-)-methyltransferase RsmH</fullName>
    </alternativeName>
</protein>
<sequence length="332" mass="37134">MTSDSFLAPHIPVLLDEVIEALSPVEGGIYIDGTFGAGGYSRAILEKADTQVIAFDRDPDAIREGASLVEKYKGRLRLVNDCFSNIGHHLDALDIKTVDGMVFDIGVSSMQIDRPERGFSIQADGPLDMRMAQAGLSAEEFLNNAQEKDIADVLYLYGEERQSRRVARAIVAARPLTTTFQLAKVIRQSLGYRPFDKKDPAAHCFQAIRIHLNRELDELKDGLQTAERFLKTKGCLAVVTFHSLEDRIVKHFMREHAGQTGQVSRHQPVIPQQNPVFFSKPARPVRAGETELARNPRARSATLRAVYRTETPFSEDISRPDTHIPRSRRQSA</sequence>
<name>RSMH_ZYMMO</name>
<keyword id="KW-0963">Cytoplasm</keyword>
<keyword id="KW-0489">Methyltransferase</keyword>
<keyword id="KW-1185">Reference proteome</keyword>
<keyword id="KW-0698">rRNA processing</keyword>
<keyword id="KW-0949">S-adenosyl-L-methionine</keyword>
<keyword id="KW-0808">Transferase</keyword>
<accession>Q9REQ9</accession>
<accession>Q5NPB3</accession>
<accession>Q9RNM0</accession>
<reference key="1">
    <citation type="submission" date="1999-08" db="EMBL/GenBank/DDBJ databases">
        <authorList>
            <person name="Um H.W."/>
            <person name="Kang H.S."/>
        </authorList>
    </citation>
    <scope>NUCLEOTIDE SEQUENCE [GENOMIC DNA]</scope>
    <source>
        <strain>ATCC 31821 / ZM4 / CP4</strain>
    </source>
</reference>
<reference key="2">
    <citation type="journal article" date="2005" name="Nat. Biotechnol.">
        <title>The genome sequence of the ethanologenic bacterium Zymomonas mobilis ZM4.</title>
        <authorList>
            <person name="Seo J.-S."/>
            <person name="Chong H."/>
            <person name="Park H.S."/>
            <person name="Yoon K.-O."/>
            <person name="Jung C."/>
            <person name="Kim J.J."/>
            <person name="Hong J.H."/>
            <person name="Kim H."/>
            <person name="Kim J.-H."/>
            <person name="Kil J.-I."/>
            <person name="Park C.J."/>
            <person name="Oh H.-M."/>
            <person name="Lee J.-S."/>
            <person name="Jin S.-J."/>
            <person name="Um H.-W."/>
            <person name="Lee H.-J."/>
            <person name="Oh S.-J."/>
            <person name="Kim J.Y."/>
            <person name="Kang H.L."/>
            <person name="Lee S.Y."/>
            <person name="Lee K.J."/>
            <person name="Kang H.S."/>
        </authorList>
    </citation>
    <scope>NUCLEOTIDE SEQUENCE [LARGE SCALE GENOMIC DNA]</scope>
    <source>
        <strain>ATCC 31821 / ZM4 / CP4</strain>
    </source>
</reference>
<gene>
    <name evidence="1" type="primary">rsmH</name>
    <name type="synonym">mraW</name>
    <name type="ordered locus">ZMO0823</name>
    <name type="ORF">zm11orf5</name>
    <name type="ORF">zm16orf1</name>
</gene>
<proteinExistence type="inferred from homology"/>
<comment type="function">
    <text evidence="1">Specifically methylates the N4 position of cytidine in position 1402 (C1402) of 16S rRNA.</text>
</comment>
<comment type="catalytic activity">
    <reaction evidence="1">
        <text>cytidine(1402) in 16S rRNA + S-adenosyl-L-methionine = N(4)-methylcytidine(1402) in 16S rRNA + S-adenosyl-L-homocysteine + H(+)</text>
        <dbReference type="Rhea" id="RHEA:42928"/>
        <dbReference type="Rhea" id="RHEA-COMP:10286"/>
        <dbReference type="Rhea" id="RHEA-COMP:10287"/>
        <dbReference type="ChEBI" id="CHEBI:15378"/>
        <dbReference type="ChEBI" id="CHEBI:57856"/>
        <dbReference type="ChEBI" id="CHEBI:59789"/>
        <dbReference type="ChEBI" id="CHEBI:74506"/>
        <dbReference type="ChEBI" id="CHEBI:82748"/>
        <dbReference type="EC" id="2.1.1.199"/>
    </reaction>
</comment>
<comment type="subcellular location">
    <subcellularLocation>
        <location evidence="1">Cytoplasm</location>
    </subcellularLocation>
</comment>
<comment type="similarity">
    <text evidence="1">Belongs to the methyltransferase superfamily. RsmH family.</text>
</comment>
<dbReference type="EC" id="2.1.1.199" evidence="1"/>
<dbReference type="EMBL" id="AF179611">
    <property type="protein sequence ID" value="AAD53943.1"/>
    <property type="molecule type" value="Genomic_DNA"/>
</dbReference>
<dbReference type="EMBL" id="AF213822">
    <property type="protein sequence ID" value="AAF23786.1"/>
    <property type="molecule type" value="Genomic_DNA"/>
</dbReference>
<dbReference type="EMBL" id="AE008692">
    <property type="protein sequence ID" value="AAV89447.1"/>
    <property type="molecule type" value="Genomic_DNA"/>
</dbReference>
<dbReference type="RefSeq" id="WP_011240693.1">
    <property type="nucleotide sequence ID" value="NZ_CP035711.1"/>
</dbReference>
<dbReference type="SMR" id="Q9REQ9"/>
<dbReference type="STRING" id="264203.ZMO0823"/>
<dbReference type="KEGG" id="zmo:ZMO0823"/>
<dbReference type="eggNOG" id="COG0275">
    <property type="taxonomic scope" value="Bacteria"/>
</dbReference>
<dbReference type="HOGENOM" id="CLU_038422_1_1_5"/>
<dbReference type="Proteomes" id="UP000001173">
    <property type="component" value="Chromosome"/>
</dbReference>
<dbReference type="GO" id="GO:0005737">
    <property type="term" value="C:cytoplasm"/>
    <property type="evidence" value="ECO:0007669"/>
    <property type="project" value="UniProtKB-SubCell"/>
</dbReference>
<dbReference type="GO" id="GO:0071424">
    <property type="term" value="F:rRNA (cytosine-N4-)-methyltransferase activity"/>
    <property type="evidence" value="ECO:0007669"/>
    <property type="project" value="UniProtKB-UniRule"/>
</dbReference>
<dbReference type="GO" id="GO:0070475">
    <property type="term" value="P:rRNA base methylation"/>
    <property type="evidence" value="ECO:0007669"/>
    <property type="project" value="UniProtKB-UniRule"/>
</dbReference>
<dbReference type="Gene3D" id="1.10.150.170">
    <property type="entry name" value="Putative methyltransferase TM0872, insert domain"/>
    <property type="match status" value="1"/>
</dbReference>
<dbReference type="Gene3D" id="3.40.50.150">
    <property type="entry name" value="Vaccinia Virus protein VP39"/>
    <property type="match status" value="1"/>
</dbReference>
<dbReference type="HAMAP" id="MF_01007">
    <property type="entry name" value="16SrRNA_methyltr_H"/>
    <property type="match status" value="1"/>
</dbReference>
<dbReference type="InterPro" id="IPR002903">
    <property type="entry name" value="RsmH"/>
</dbReference>
<dbReference type="InterPro" id="IPR023397">
    <property type="entry name" value="SAM-dep_MeTrfase_MraW_recog"/>
</dbReference>
<dbReference type="InterPro" id="IPR029063">
    <property type="entry name" value="SAM-dependent_MTases_sf"/>
</dbReference>
<dbReference type="NCBIfam" id="TIGR00006">
    <property type="entry name" value="16S rRNA (cytosine(1402)-N(4))-methyltransferase RsmH"/>
    <property type="match status" value="1"/>
</dbReference>
<dbReference type="PANTHER" id="PTHR11265:SF0">
    <property type="entry name" value="12S RRNA N4-METHYLCYTIDINE METHYLTRANSFERASE"/>
    <property type="match status" value="1"/>
</dbReference>
<dbReference type="PANTHER" id="PTHR11265">
    <property type="entry name" value="S-ADENOSYL-METHYLTRANSFERASE MRAW"/>
    <property type="match status" value="1"/>
</dbReference>
<dbReference type="Pfam" id="PF01795">
    <property type="entry name" value="Methyltransf_5"/>
    <property type="match status" value="1"/>
</dbReference>
<dbReference type="PIRSF" id="PIRSF004486">
    <property type="entry name" value="MraW"/>
    <property type="match status" value="1"/>
</dbReference>
<dbReference type="SUPFAM" id="SSF81799">
    <property type="entry name" value="Putative methyltransferase TM0872, insert domain"/>
    <property type="match status" value="1"/>
</dbReference>
<dbReference type="SUPFAM" id="SSF53335">
    <property type="entry name" value="S-adenosyl-L-methionine-dependent methyltransferases"/>
    <property type="match status" value="1"/>
</dbReference>